<proteinExistence type="inferred from homology"/>
<keyword id="KW-0067">ATP-binding</keyword>
<keyword id="KW-0436">Ligase</keyword>
<keyword id="KW-0460">Magnesium</keyword>
<keyword id="KW-0479">Metal-binding</keyword>
<keyword id="KW-0547">Nucleotide-binding</keyword>
<keyword id="KW-1185">Reference proteome</keyword>
<keyword id="KW-0833">Ubl conjugation pathway</keyword>
<comment type="function">
    <text evidence="1">Catalyzes the covalent attachment of the prokaryotic ubiquitin-like protein modifier Pup to the proteasomal substrate proteins, thereby targeting them for proteasomal degradation. This tagging system is termed pupylation. The ligation reaction involves the side-chain carboxylate of the C-terminal glutamate of Pup and the side-chain amino group of a substrate lysine.</text>
</comment>
<comment type="catalytic activity">
    <reaction evidence="1">
        <text>ATP + [prokaryotic ubiquitin-like protein]-L-glutamate + [protein]-L-lysine = ADP + phosphate + N(6)-([prokaryotic ubiquitin-like protein]-gamma-L-glutamyl)-[protein]-L-lysine.</text>
        <dbReference type="EC" id="6.3.1.19"/>
    </reaction>
</comment>
<comment type="pathway">
    <text evidence="1">Protein degradation; proteasomal Pup-dependent pathway.</text>
</comment>
<comment type="pathway">
    <text evidence="1">Protein modification; protein pupylation.</text>
</comment>
<comment type="miscellaneous">
    <text evidence="1">The reaction mechanism probably proceeds via the activation of Pup by phosphorylation of its C-terminal glutamate, which is then subject to nucleophilic attack by the substrate lysine, resulting in an isopeptide bond and the release of phosphate as a good leaving group.</text>
</comment>
<comment type="similarity">
    <text evidence="1">Belongs to the Pup ligase/Pup deamidase family. Pup-conjugating enzyme subfamily.</text>
</comment>
<accession>A5U4C3</accession>
<reference key="1">
    <citation type="journal article" date="2008" name="PLoS ONE">
        <title>Genetic basis of virulence attenuation revealed by comparative genomic analysis of Mycobacterium tuberculosis strain H37Ra versus H37Rv.</title>
        <authorList>
            <person name="Zheng H."/>
            <person name="Lu L."/>
            <person name="Wang B."/>
            <person name="Pu S."/>
            <person name="Zhang X."/>
            <person name="Zhu G."/>
            <person name="Shi W."/>
            <person name="Zhang L."/>
            <person name="Wang H."/>
            <person name="Wang S."/>
            <person name="Zhao G."/>
            <person name="Zhang Y."/>
        </authorList>
    </citation>
    <scope>NUCLEOTIDE SEQUENCE [LARGE SCALE GENOMIC DNA]</scope>
    <source>
        <strain>ATCC 25177 / H37Ra</strain>
    </source>
</reference>
<name>PAFA_MYCTA</name>
<dbReference type="EC" id="6.3.1.19" evidence="1"/>
<dbReference type="EMBL" id="CP000611">
    <property type="protein sequence ID" value="ABQ73873.1"/>
    <property type="molecule type" value="Genomic_DNA"/>
</dbReference>
<dbReference type="RefSeq" id="WP_003410781.1">
    <property type="nucleotide sequence ID" value="NZ_CP016972.1"/>
</dbReference>
<dbReference type="SMR" id="A5U4C3"/>
<dbReference type="GeneID" id="45426074"/>
<dbReference type="KEGG" id="mra:MRA_2112"/>
<dbReference type="eggNOG" id="COG0638">
    <property type="taxonomic scope" value="Bacteria"/>
</dbReference>
<dbReference type="HOGENOM" id="CLU_040524_0_1_11"/>
<dbReference type="UniPathway" id="UPA00997"/>
<dbReference type="UniPathway" id="UPA00998"/>
<dbReference type="Proteomes" id="UP000001988">
    <property type="component" value="Chromosome"/>
</dbReference>
<dbReference type="GO" id="GO:0005524">
    <property type="term" value="F:ATP binding"/>
    <property type="evidence" value="ECO:0007669"/>
    <property type="project" value="UniProtKB-UniRule"/>
</dbReference>
<dbReference type="GO" id="GO:0016879">
    <property type="term" value="F:ligase activity, forming carbon-nitrogen bonds"/>
    <property type="evidence" value="ECO:0007669"/>
    <property type="project" value="InterPro"/>
</dbReference>
<dbReference type="GO" id="GO:0000287">
    <property type="term" value="F:magnesium ion binding"/>
    <property type="evidence" value="ECO:0007669"/>
    <property type="project" value="UniProtKB-UniRule"/>
</dbReference>
<dbReference type="GO" id="GO:0019787">
    <property type="term" value="F:ubiquitin-like protein transferase activity"/>
    <property type="evidence" value="ECO:0007669"/>
    <property type="project" value="UniProtKB-UniRule"/>
</dbReference>
<dbReference type="GO" id="GO:0019941">
    <property type="term" value="P:modification-dependent protein catabolic process"/>
    <property type="evidence" value="ECO:0007669"/>
    <property type="project" value="UniProtKB-UniRule"/>
</dbReference>
<dbReference type="GO" id="GO:0010498">
    <property type="term" value="P:proteasomal protein catabolic process"/>
    <property type="evidence" value="ECO:0007669"/>
    <property type="project" value="UniProtKB-UniRule"/>
</dbReference>
<dbReference type="GO" id="GO:0070490">
    <property type="term" value="P:protein pupylation"/>
    <property type="evidence" value="ECO:0007669"/>
    <property type="project" value="UniProtKB-UniRule"/>
</dbReference>
<dbReference type="HAMAP" id="MF_02111">
    <property type="entry name" value="Pup_ligase"/>
    <property type="match status" value="1"/>
</dbReference>
<dbReference type="InterPro" id="IPR022279">
    <property type="entry name" value="Pup_ligase"/>
</dbReference>
<dbReference type="InterPro" id="IPR004347">
    <property type="entry name" value="Pup_ligase/deamidase"/>
</dbReference>
<dbReference type="NCBIfam" id="TIGR03686">
    <property type="entry name" value="pupylate_PafA"/>
    <property type="match status" value="1"/>
</dbReference>
<dbReference type="PANTHER" id="PTHR42307">
    <property type="entry name" value="PUP DEAMIDASE/DEPUPYLASE"/>
    <property type="match status" value="1"/>
</dbReference>
<dbReference type="PANTHER" id="PTHR42307:SF3">
    <property type="entry name" value="PUP--PROTEIN LIGASE"/>
    <property type="match status" value="1"/>
</dbReference>
<dbReference type="Pfam" id="PF03136">
    <property type="entry name" value="Pup_ligase"/>
    <property type="match status" value="1"/>
</dbReference>
<dbReference type="PIRSF" id="PIRSF018077">
    <property type="entry name" value="UCP018077"/>
    <property type="match status" value="1"/>
</dbReference>
<sequence length="452" mass="51384">MQRRIMGIETEFGVTCTFHGHRRLSPDEVARYLFRRVVSWGRSSNVFLRNGARLYLDVGSHPEYATAECDSLVQLVTHDRAGEWVLEDLLVDAEQRLADEGIGGDIYLFKNNTDSAGNSYGCHENYLIVRAGEFSRISDVLLPFLVTRQLICGAGKVLQTPKAATYCLSQRAEHIWEGVSSATTRSRPIINTRDEPHADAEKYRRLHVIVGDSNMSETTTMLKVGTAALVLEMIESGVAFRDFSLDNPIRAIREVSHDVTGRRPVRLAGGRQASALDIQREYYTRAVEHLQTREPNAQIEQVVDLWGRQLDAVESQDFAKVDTEIDWVIKRKLFQRYQDRYDMELSHPKIAQLDLAYHDIKRGRGIFDLLQRKGLAARVTTDEEIAEAVDQPPQTTRARLRGEFISAAQEAGRDFTVDWVHLKLNDQAQRTVLCKDPFRAVDERVKRLIASM</sequence>
<organism>
    <name type="scientific">Mycobacterium tuberculosis (strain ATCC 25177 / H37Ra)</name>
    <dbReference type="NCBI Taxonomy" id="419947"/>
    <lineage>
        <taxon>Bacteria</taxon>
        <taxon>Bacillati</taxon>
        <taxon>Actinomycetota</taxon>
        <taxon>Actinomycetes</taxon>
        <taxon>Mycobacteriales</taxon>
        <taxon>Mycobacteriaceae</taxon>
        <taxon>Mycobacterium</taxon>
        <taxon>Mycobacterium tuberculosis complex</taxon>
    </lineage>
</organism>
<evidence type="ECO:0000255" key="1">
    <source>
        <dbReference type="HAMAP-Rule" id="MF_02111"/>
    </source>
</evidence>
<protein>
    <recommendedName>
        <fullName evidence="1">Pup--protein ligase</fullName>
        <ecNumber evidence="1">6.3.1.19</ecNumber>
    </recommendedName>
    <alternativeName>
        <fullName evidence="1">Proteasome accessory factor A</fullName>
    </alternativeName>
    <alternativeName>
        <fullName evidence="1">Pup-conjugating enzyme</fullName>
    </alternativeName>
</protein>
<feature type="chain" id="PRO_0000395935" description="Pup--protein ligase">
    <location>
        <begin position="1"/>
        <end position="452"/>
    </location>
</feature>
<feature type="active site" description="Proton acceptor" evidence="1">
    <location>
        <position position="57"/>
    </location>
</feature>
<feature type="binding site" evidence="1">
    <location>
        <position position="9"/>
    </location>
    <ligand>
        <name>Mg(2+)</name>
        <dbReference type="ChEBI" id="CHEBI:18420"/>
    </ligand>
</feature>
<feature type="binding site" evidence="1">
    <location>
        <position position="53"/>
    </location>
    <ligand>
        <name>ATP</name>
        <dbReference type="ChEBI" id="CHEBI:30616"/>
    </ligand>
</feature>
<feature type="binding site" evidence="1">
    <location>
        <position position="55"/>
    </location>
    <ligand>
        <name>Mg(2+)</name>
        <dbReference type="ChEBI" id="CHEBI:18420"/>
    </ligand>
</feature>
<feature type="binding site" evidence="1">
    <location>
        <position position="63"/>
    </location>
    <ligand>
        <name>Mg(2+)</name>
        <dbReference type="ChEBI" id="CHEBI:18420"/>
    </ligand>
</feature>
<feature type="binding site" evidence="1">
    <location>
        <position position="66"/>
    </location>
    <ligand>
        <name>ATP</name>
        <dbReference type="ChEBI" id="CHEBI:30616"/>
    </ligand>
</feature>
<feature type="binding site" evidence="1">
    <location>
        <position position="419"/>
    </location>
    <ligand>
        <name>ATP</name>
        <dbReference type="ChEBI" id="CHEBI:30616"/>
    </ligand>
</feature>
<gene>
    <name evidence="1" type="primary">pafA</name>
    <name type="ordered locus">MRA_2112</name>
</gene>